<sequence>MSDILSSLAYLTGKPVASAKIKAQPEHFQVREDLGFAFTGEGEHLLVRIRKTGENTSFVANELAKACGVKSKDVSWAGLKDRHAVTEQWLSVHLPKGETPDFSAFLAQHPSIEILATDRHNKKLRPGDLVGNEFVVTLSEVTDVADVEQRLEKVKQVGVPNYFGSQRFGNDGNNLEEASRWGRENVRTRNQNKRSMYLSAARSWIFNRIVSARLENGVFDKFIDGDVAQTASGTQLVDASNMAALQAQFAQGEVAITAALAGDNALPTQADALTLEQPFLDEEPDLMALIRGNRMRHDRRDIALKPQDLAWTVDGNNITMTFSLDAGSFATSIVRELVIEEKVEREY</sequence>
<protein>
    <recommendedName>
        <fullName evidence="1">tRNA pseudouridine synthase D</fullName>
        <ecNumber evidence="1">5.4.99.27</ecNumber>
    </recommendedName>
    <alternativeName>
        <fullName evidence="1">tRNA pseudouridine(13) synthase</fullName>
    </alternativeName>
    <alternativeName>
        <fullName evidence="1">tRNA pseudouridylate synthase D</fullName>
    </alternativeName>
    <alternativeName>
        <fullName evidence="1">tRNA-uridine isomerase D</fullName>
    </alternativeName>
</protein>
<proteinExistence type="inferred from homology"/>
<name>TRUD_VIBC1</name>
<dbReference type="EC" id="5.4.99.27" evidence="1"/>
<dbReference type="EMBL" id="CP000789">
    <property type="protein sequence ID" value="ABU72457.1"/>
    <property type="molecule type" value="Genomic_DNA"/>
</dbReference>
<dbReference type="RefSeq" id="WP_012128911.1">
    <property type="nucleotide sequence ID" value="NC_009783.1"/>
</dbReference>
<dbReference type="SMR" id="A7MTT9"/>
<dbReference type="KEGG" id="vha:VIBHAR_03521"/>
<dbReference type="PATRIC" id="fig|338187.25.peg.2689"/>
<dbReference type="Proteomes" id="UP000008152">
    <property type="component" value="Chromosome I"/>
</dbReference>
<dbReference type="GO" id="GO:0005829">
    <property type="term" value="C:cytosol"/>
    <property type="evidence" value="ECO:0007669"/>
    <property type="project" value="TreeGrafter"/>
</dbReference>
<dbReference type="GO" id="GO:0003723">
    <property type="term" value="F:RNA binding"/>
    <property type="evidence" value="ECO:0007669"/>
    <property type="project" value="InterPro"/>
</dbReference>
<dbReference type="GO" id="GO:0160150">
    <property type="term" value="F:tRNA pseudouridine(13) synthase activity"/>
    <property type="evidence" value="ECO:0007669"/>
    <property type="project" value="UniProtKB-EC"/>
</dbReference>
<dbReference type="GO" id="GO:0031119">
    <property type="term" value="P:tRNA pseudouridine synthesis"/>
    <property type="evidence" value="ECO:0007669"/>
    <property type="project" value="UniProtKB-UniRule"/>
</dbReference>
<dbReference type="CDD" id="cd02575">
    <property type="entry name" value="PseudoU_synth_EcTruD"/>
    <property type="match status" value="1"/>
</dbReference>
<dbReference type="Gene3D" id="3.30.2350.20">
    <property type="entry name" value="TruD, catalytic domain"/>
    <property type="match status" value="1"/>
</dbReference>
<dbReference type="Gene3D" id="3.30.2340.10">
    <property type="entry name" value="TruD, insertion domain"/>
    <property type="match status" value="1"/>
</dbReference>
<dbReference type="HAMAP" id="MF_01082">
    <property type="entry name" value="TruD"/>
    <property type="match status" value="1"/>
</dbReference>
<dbReference type="InterPro" id="IPR020103">
    <property type="entry name" value="PsdUridine_synth_cat_dom_sf"/>
</dbReference>
<dbReference type="InterPro" id="IPR001656">
    <property type="entry name" value="PsdUridine_synth_TruD"/>
</dbReference>
<dbReference type="InterPro" id="IPR020119">
    <property type="entry name" value="PsdUridine_synth_TruD_CS"/>
</dbReference>
<dbReference type="InterPro" id="IPR011760">
    <property type="entry name" value="PsdUridine_synth_TruD_insert"/>
</dbReference>
<dbReference type="InterPro" id="IPR042214">
    <property type="entry name" value="TruD_catalytic"/>
</dbReference>
<dbReference type="InterPro" id="IPR043165">
    <property type="entry name" value="TruD_insert_sf"/>
</dbReference>
<dbReference type="InterPro" id="IPR050170">
    <property type="entry name" value="TruD_pseudoU_synthase"/>
</dbReference>
<dbReference type="NCBIfam" id="NF002155">
    <property type="entry name" value="PRK00984.1-4"/>
    <property type="match status" value="1"/>
</dbReference>
<dbReference type="NCBIfam" id="TIGR00094">
    <property type="entry name" value="tRNA_TruD_broad"/>
    <property type="match status" value="1"/>
</dbReference>
<dbReference type="PANTHER" id="PTHR47811">
    <property type="entry name" value="TRNA PSEUDOURIDINE SYNTHASE D"/>
    <property type="match status" value="1"/>
</dbReference>
<dbReference type="PANTHER" id="PTHR47811:SF1">
    <property type="entry name" value="TRNA PSEUDOURIDINE SYNTHASE D"/>
    <property type="match status" value="1"/>
</dbReference>
<dbReference type="Pfam" id="PF01142">
    <property type="entry name" value="TruD"/>
    <property type="match status" value="2"/>
</dbReference>
<dbReference type="SUPFAM" id="SSF55120">
    <property type="entry name" value="Pseudouridine synthase"/>
    <property type="match status" value="1"/>
</dbReference>
<dbReference type="PROSITE" id="PS50984">
    <property type="entry name" value="TRUD"/>
    <property type="match status" value="1"/>
</dbReference>
<dbReference type="PROSITE" id="PS01268">
    <property type="entry name" value="UPF0024"/>
    <property type="match status" value="1"/>
</dbReference>
<gene>
    <name evidence="1" type="primary">truD</name>
    <name type="ordered locus">VIBHAR_03521</name>
</gene>
<reference key="1">
    <citation type="submission" date="2007-08" db="EMBL/GenBank/DDBJ databases">
        <authorList>
            <consortium name="The Vibrio harveyi Genome Sequencing Project"/>
            <person name="Bassler B."/>
            <person name="Clifton S.W."/>
            <person name="Fulton L."/>
            <person name="Delehaunty K."/>
            <person name="Fronick C."/>
            <person name="Harrison M."/>
            <person name="Markivic C."/>
            <person name="Fulton R."/>
            <person name="Tin-Wollam A.-M."/>
            <person name="Shah N."/>
            <person name="Pepin K."/>
            <person name="Nash W."/>
            <person name="Thiruvilangam P."/>
            <person name="Bhonagiri V."/>
            <person name="Waters C."/>
            <person name="Tu K.C."/>
            <person name="Irgon J."/>
            <person name="Wilson R.K."/>
        </authorList>
    </citation>
    <scope>NUCLEOTIDE SEQUENCE [LARGE SCALE GENOMIC DNA]</scope>
    <source>
        <strain>ATCC BAA-1116 / BB120</strain>
    </source>
</reference>
<comment type="function">
    <text evidence="1">Responsible for synthesis of pseudouridine from uracil-13 in transfer RNAs.</text>
</comment>
<comment type="catalytic activity">
    <reaction evidence="1">
        <text>uridine(13) in tRNA = pseudouridine(13) in tRNA</text>
        <dbReference type="Rhea" id="RHEA:42540"/>
        <dbReference type="Rhea" id="RHEA-COMP:10105"/>
        <dbReference type="Rhea" id="RHEA-COMP:10106"/>
        <dbReference type="ChEBI" id="CHEBI:65314"/>
        <dbReference type="ChEBI" id="CHEBI:65315"/>
        <dbReference type="EC" id="5.4.99.27"/>
    </reaction>
</comment>
<comment type="similarity">
    <text evidence="1">Belongs to the pseudouridine synthase TruD family.</text>
</comment>
<evidence type="ECO:0000255" key="1">
    <source>
        <dbReference type="HAMAP-Rule" id="MF_01082"/>
    </source>
</evidence>
<keyword id="KW-0413">Isomerase</keyword>
<keyword id="KW-0819">tRNA processing</keyword>
<organism>
    <name type="scientific">Vibrio campbellii (strain ATCC BAA-1116)</name>
    <dbReference type="NCBI Taxonomy" id="2902295"/>
    <lineage>
        <taxon>Bacteria</taxon>
        <taxon>Pseudomonadati</taxon>
        <taxon>Pseudomonadota</taxon>
        <taxon>Gammaproteobacteria</taxon>
        <taxon>Vibrionales</taxon>
        <taxon>Vibrionaceae</taxon>
        <taxon>Vibrio</taxon>
    </lineage>
</organism>
<feature type="chain" id="PRO_1000084768" description="tRNA pseudouridine synthase D">
    <location>
        <begin position="1"/>
        <end position="347"/>
    </location>
</feature>
<feature type="domain" description="TRUD" evidence="1">
    <location>
        <begin position="158"/>
        <end position="305"/>
    </location>
</feature>
<feature type="active site" description="Nucleophile" evidence="1">
    <location>
        <position position="81"/>
    </location>
</feature>
<accession>A7MTT9</accession>